<accession>Q9UU77</accession>
<dbReference type="EMBL" id="CU329672">
    <property type="protein sequence ID" value="CAB54869.1"/>
    <property type="molecule type" value="Genomic_DNA"/>
</dbReference>
<dbReference type="PIR" id="T41689">
    <property type="entry name" value="T41689"/>
</dbReference>
<dbReference type="SMR" id="Q9UU77"/>
<dbReference type="BioGRID" id="275373">
    <property type="interactions" value="43"/>
</dbReference>
<dbReference type="FunCoup" id="Q9UU77">
    <property type="interactions" value="23"/>
</dbReference>
<dbReference type="STRING" id="284812.Q9UU77"/>
<dbReference type="iPTMnet" id="Q9UU77"/>
<dbReference type="PaxDb" id="4896-SPCP1E11.10.1"/>
<dbReference type="EnsemblFungi" id="SPCP1E11.10.1">
    <property type="protein sequence ID" value="SPCP1E11.10.1:pep"/>
    <property type="gene ID" value="SPCP1E11.10"/>
</dbReference>
<dbReference type="KEGG" id="spo:2538792"/>
<dbReference type="PomBase" id="SPCP1E11.10"/>
<dbReference type="VEuPathDB" id="FungiDB:SPCP1E11.10"/>
<dbReference type="eggNOG" id="KOG0504">
    <property type="taxonomic scope" value="Eukaryota"/>
</dbReference>
<dbReference type="HOGENOM" id="CLU_078327_0_0_1"/>
<dbReference type="InParanoid" id="Q9UU77"/>
<dbReference type="OMA" id="PNIWIAA"/>
<dbReference type="PhylomeDB" id="Q9UU77"/>
<dbReference type="PRO" id="PR:Q9UU77"/>
<dbReference type="Proteomes" id="UP000002485">
    <property type="component" value="Chromosome III"/>
</dbReference>
<dbReference type="GO" id="GO:0005829">
    <property type="term" value="C:cytosol"/>
    <property type="evidence" value="ECO:0007005"/>
    <property type="project" value="PomBase"/>
</dbReference>
<dbReference type="GO" id="GO:0005634">
    <property type="term" value="C:nucleus"/>
    <property type="evidence" value="ECO:0007005"/>
    <property type="project" value="PomBase"/>
</dbReference>
<dbReference type="Gene3D" id="1.25.40.20">
    <property type="entry name" value="Ankyrin repeat-containing domain"/>
    <property type="match status" value="1"/>
</dbReference>
<dbReference type="InterPro" id="IPR002110">
    <property type="entry name" value="Ankyrin_rpt"/>
</dbReference>
<dbReference type="InterPro" id="IPR036770">
    <property type="entry name" value="Ankyrin_rpt-contain_sf"/>
</dbReference>
<dbReference type="PANTHER" id="PTHR24171">
    <property type="entry name" value="ANKYRIN REPEAT DOMAIN-CONTAINING PROTEIN 39-RELATED"/>
    <property type="match status" value="1"/>
</dbReference>
<dbReference type="Pfam" id="PF12796">
    <property type="entry name" value="Ank_2"/>
    <property type="match status" value="1"/>
</dbReference>
<dbReference type="SMART" id="SM00248">
    <property type="entry name" value="ANK"/>
    <property type="match status" value="1"/>
</dbReference>
<dbReference type="SUPFAM" id="SSF48403">
    <property type="entry name" value="Ankyrin repeat"/>
    <property type="match status" value="1"/>
</dbReference>
<dbReference type="PROSITE" id="PS50297">
    <property type="entry name" value="ANK_REP_REGION"/>
    <property type="match status" value="1"/>
</dbReference>
<dbReference type="PROSITE" id="PS50088">
    <property type="entry name" value="ANK_REPEAT"/>
    <property type="match status" value="1"/>
</dbReference>
<protein>
    <recommendedName>
        <fullName>Ankyrin repeat-containing protein P1E11.10</fullName>
    </recommendedName>
</protein>
<comment type="subcellular location">
    <subcellularLocation>
        <location evidence="1">Cytoplasm</location>
    </subcellularLocation>
    <subcellularLocation>
        <location evidence="1">Nucleus</location>
    </subcellularLocation>
</comment>
<organism>
    <name type="scientific">Schizosaccharomyces pombe (strain 972 / ATCC 24843)</name>
    <name type="common">Fission yeast</name>
    <dbReference type="NCBI Taxonomy" id="284812"/>
    <lineage>
        <taxon>Eukaryota</taxon>
        <taxon>Fungi</taxon>
        <taxon>Dikarya</taxon>
        <taxon>Ascomycota</taxon>
        <taxon>Taphrinomycotina</taxon>
        <taxon>Schizosaccharomycetes</taxon>
        <taxon>Schizosaccharomycetales</taxon>
        <taxon>Schizosaccharomycetaceae</taxon>
        <taxon>Schizosaccharomyces</taxon>
    </lineage>
</organism>
<gene>
    <name type="ORF">SPCP1E11.10</name>
</gene>
<sequence>MSTTTPNIWIAASDGKTDVVLKHLDSGISPNAADENGYTPIHAAVSYGHSDLLKILVERGGDINIRDQDGETPLFVCEKLEIAHDLINQYNADTTVKNNDGLIAAQVIEANGEFPELAKYLYSFTDLEPKDVNTLPNDTKIEYAKLMTEQEMDEEAGQPLLDQKAKAEIDRILALRDTGVNVDDELRKILTGALSGHFERNVRPRSN</sequence>
<evidence type="ECO:0000269" key="1">
    <source>
    </source>
</evidence>
<reference key="1">
    <citation type="journal article" date="2002" name="Nature">
        <title>The genome sequence of Schizosaccharomyces pombe.</title>
        <authorList>
            <person name="Wood V."/>
            <person name="Gwilliam R."/>
            <person name="Rajandream M.A."/>
            <person name="Lyne M.H."/>
            <person name="Lyne R."/>
            <person name="Stewart A."/>
            <person name="Sgouros J.G."/>
            <person name="Peat N."/>
            <person name="Hayles J."/>
            <person name="Baker S.G."/>
            <person name="Basham D."/>
            <person name="Bowman S."/>
            <person name="Brooks K."/>
            <person name="Brown D."/>
            <person name="Brown S."/>
            <person name="Chillingworth T."/>
            <person name="Churcher C.M."/>
            <person name="Collins M."/>
            <person name="Connor R."/>
            <person name="Cronin A."/>
            <person name="Davis P."/>
            <person name="Feltwell T."/>
            <person name="Fraser A."/>
            <person name="Gentles S."/>
            <person name="Goble A."/>
            <person name="Hamlin N."/>
            <person name="Harris D.E."/>
            <person name="Hidalgo J."/>
            <person name="Hodgson G."/>
            <person name="Holroyd S."/>
            <person name="Hornsby T."/>
            <person name="Howarth S."/>
            <person name="Huckle E.J."/>
            <person name="Hunt S."/>
            <person name="Jagels K."/>
            <person name="James K.D."/>
            <person name="Jones L."/>
            <person name="Jones M."/>
            <person name="Leather S."/>
            <person name="McDonald S."/>
            <person name="McLean J."/>
            <person name="Mooney P."/>
            <person name="Moule S."/>
            <person name="Mungall K.L."/>
            <person name="Murphy L.D."/>
            <person name="Niblett D."/>
            <person name="Odell C."/>
            <person name="Oliver K."/>
            <person name="O'Neil S."/>
            <person name="Pearson D."/>
            <person name="Quail M.A."/>
            <person name="Rabbinowitsch E."/>
            <person name="Rutherford K.M."/>
            <person name="Rutter S."/>
            <person name="Saunders D."/>
            <person name="Seeger K."/>
            <person name="Sharp S."/>
            <person name="Skelton J."/>
            <person name="Simmonds M.N."/>
            <person name="Squares R."/>
            <person name="Squares S."/>
            <person name="Stevens K."/>
            <person name="Taylor K."/>
            <person name="Taylor R.G."/>
            <person name="Tivey A."/>
            <person name="Walsh S.V."/>
            <person name="Warren T."/>
            <person name="Whitehead S."/>
            <person name="Woodward J.R."/>
            <person name="Volckaert G."/>
            <person name="Aert R."/>
            <person name="Robben J."/>
            <person name="Grymonprez B."/>
            <person name="Weltjens I."/>
            <person name="Vanstreels E."/>
            <person name="Rieger M."/>
            <person name="Schaefer M."/>
            <person name="Mueller-Auer S."/>
            <person name="Gabel C."/>
            <person name="Fuchs M."/>
            <person name="Duesterhoeft A."/>
            <person name="Fritzc C."/>
            <person name="Holzer E."/>
            <person name="Moestl D."/>
            <person name="Hilbert H."/>
            <person name="Borzym K."/>
            <person name="Langer I."/>
            <person name="Beck A."/>
            <person name="Lehrach H."/>
            <person name="Reinhardt R."/>
            <person name="Pohl T.M."/>
            <person name="Eger P."/>
            <person name="Zimmermann W."/>
            <person name="Wedler H."/>
            <person name="Wambutt R."/>
            <person name="Purnelle B."/>
            <person name="Goffeau A."/>
            <person name="Cadieu E."/>
            <person name="Dreano S."/>
            <person name="Gloux S."/>
            <person name="Lelaure V."/>
            <person name="Mottier S."/>
            <person name="Galibert F."/>
            <person name="Aves S.J."/>
            <person name="Xiang Z."/>
            <person name="Hunt C."/>
            <person name="Moore K."/>
            <person name="Hurst S.M."/>
            <person name="Lucas M."/>
            <person name="Rochet M."/>
            <person name="Gaillardin C."/>
            <person name="Tallada V.A."/>
            <person name="Garzon A."/>
            <person name="Thode G."/>
            <person name="Daga R.R."/>
            <person name="Cruzado L."/>
            <person name="Jimenez J."/>
            <person name="Sanchez M."/>
            <person name="del Rey F."/>
            <person name="Benito J."/>
            <person name="Dominguez A."/>
            <person name="Revuelta J.L."/>
            <person name="Moreno S."/>
            <person name="Armstrong J."/>
            <person name="Forsburg S.L."/>
            <person name="Cerutti L."/>
            <person name="Lowe T."/>
            <person name="McCombie W.R."/>
            <person name="Paulsen I."/>
            <person name="Potashkin J."/>
            <person name="Shpakovski G.V."/>
            <person name="Ussery D."/>
            <person name="Barrell B.G."/>
            <person name="Nurse P."/>
        </authorList>
    </citation>
    <scope>NUCLEOTIDE SEQUENCE [LARGE SCALE GENOMIC DNA]</scope>
    <source>
        <strain>972 / ATCC 24843</strain>
    </source>
</reference>
<reference key="2">
    <citation type="journal article" date="2006" name="Nat. Biotechnol.">
        <title>ORFeome cloning and global analysis of protein localization in the fission yeast Schizosaccharomyces pombe.</title>
        <authorList>
            <person name="Matsuyama A."/>
            <person name="Arai R."/>
            <person name="Yashiroda Y."/>
            <person name="Shirai A."/>
            <person name="Kamata A."/>
            <person name="Sekido S."/>
            <person name="Kobayashi Y."/>
            <person name="Hashimoto A."/>
            <person name="Hamamoto M."/>
            <person name="Hiraoka Y."/>
            <person name="Horinouchi S."/>
            <person name="Yoshida M."/>
        </authorList>
    </citation>
    <scope>SUBCELLULAR LOCATION [LARGE SCALE ANALYSIS]</scope>
</reference>
<keyword id="KW-0040">ANK repeat</keyword>
<keyword id="KW-0963">Cytoplasm</keyword>
<keyword id="KW-0539">Nucleus</keyword>
<keyword id="KW-1185">Reference proteome</keyword>
<keyword id="KW-0677">Repeat</keyword>
<proteinExistence type="predicted"/>
<name>YQMA_SCHPO</name>
<feature type="chain" id="PRO_0000310324" description="Ankyrin repeat-containing protein P1E11.10">
    <location>
        <begin position="1"/>
        <end position="207"/>
    </location>
</feature>
<feature type="repeat" description="ANK 1">
    <location>
        <begin position="36"/>
        <end position="65"/>
    </location>
</feature>
<feature type="repeat" description="ANK 2">
    <location>
        <begin position="69"/>
        <end position="98"/>
    </location>
</feature>